<evidence type="ECO:0000250" key="1"/>
<evidence type="ECO:0000255" key="2"/>
<evidence type="ECO:0000255" key="3">
    <source>
        <dbReference type="PROSITE-ProRule" id="PRU10037"/>
    </source>
</evidence>
<evidence type="ECO:0000256" key="4">
    <source>
        <dbReference type="SAM" id="MobiDB-lite"/>
    </source>
</evidence>
<evidence type="ECO:0000305" key="5"/>
<dbReference type="EC" id="3.1.1.3"/>
<dbReference type="EMBL" id="AE017343">
    <property type="protein sequence ID" value="AAW42129.1"/>
    <property type="molecule type" value="Genomic_DNA"/>
</dbReference>
<dbReference type="RefSeq" id="XP_569436.1">
    <property type="nucleotide sequence ID" value="XM_569436.1"/>
</dbReference>
<dbReference type="FunCoup" id="P0CO60">
    <property type="interactions" value="53"/>
</dbReference>
<dbReference type="STRING" id="214684.P0CO60"/>
<dbReference type="ESTHER" id="cryne-q5kl13">
    <property type="family name" value="ATG15-related-lipase"/>
</dbReference>
<dbReference type="GlyCosmos" id="P0CO60">
    <property type="glycosylation" value="7 sites, No reported glycans"/>
</dbReference>
<dbReference type="PaxDb" id="214684-P0CO60"/>
<dbReference type="EnsemblFungi" id="AAW42129">
    <property type="protein sequence ID" value="AAW42129"/>
    <property type="gene ID" value="CNC01140"/>
</dbReference>
<dbReference type="GeneID" id="3256692"/>
<dbReference type="KEGG" id="cne:CNC01140"/>
<dbReference type="VEuPathDB" id="FungiDB:CNC01140"/>
<dbReference type="eggNOG" id="KOG4540">
    <property type="taxonomic scope" value="Eukaryota"/>
</dbReference>
<dbReference type="HOGENOM" id="CLU_028295_1_1_1"/>
<dbReference type="InParanoid" id="P0CO60"/>
<dbReference type="OMA" id="LESKCHT"/>
<dbReference type="OrthoDB" id="58570at2759"/>
<dbReference type="Proteomes" id="UP000002149">
    <property type="component" value="Chromosome 3"/>
</dbReference>
<dbReference type="GO" id="GO:0005789">
    <property type="term" value="C:endoplasmic reticulum membrane"/>
    <property type="evidence" value="ECO:0007669"/>
    <property type="project" value="UniProtKB-SubCell"/>
</dbReference>
<dbReference type="GO" id="GO:0000139">
    <property type="term" value="C:Golgi membrane"/>
    <property type="evidence" value="ECO:0007669"/>
    <property type="project" value="UniProtKB-SubCell"/>
</dbReference>
<dbReference type="GO" id="GO:0016020">
    <property type="term" value="C:membrane"/>
    <property type="evidence" value="ECO:0000318"/>
    <property type="project" value="GO_Central"/>
</dbReference>
<dbReference type="GO" id="GO:0032585">
    <property type="term" value="C:multivesicular body membrane"/>
    <property type="evidence" value="ECO:0007669"/>
    <property type="project" value="UniProtKB-SubCell"/>
</dbReference>
<dbReference type="GO" id="GO:0005775">
    <property type="term" value="C:vacuolar lumen"/>
    <property type="evidence" value="ECO:0000318"/>
    <property type="project" value="GO_Central"/>
</dbReference>
<dbReference type="GO" id="GO:0005774">
    <property type="term" value="C:vacuolar membrane"/>
    <property type="evidence" value="ECO:0007669"/>
    <property type="project" value="EnsemblFungi"/>
</dbReference>
<dbReference type="GO" id="GO:0004620">
    <property type="term" value="F:phospholipase activity"/>
    <property type="evidence" value="ECO:0000318"/>
    <property type="project" value="GO_Central"/>
</dbReference>
<dbReference type="GO" id="GO:0004806">
    <property type="term" value="F:triacylglycerol lipase activity"/>
    <property type="evidence" value="ECO:0007669"/>
    <property type="project" value="UniProtKB-EC"/>
</dbReference>
<dbReference type="GO" id="GO:0034496">
    <property type="term" value="P:multivesicular body membrane disassembly"/>
    <property type="evidence" value="ECO:0000318"/>
    <property type="project" value="GO_Central"/>
</dbReference>
<dbReference type="GO" id="GO:0046461">
    <property type="term" value="P:neutral lipid catabolic process"/>
    <property type="evidence" value="ECO:0000318"/>
    <property type="project" value="GO_Central"/>
</dbReference>
<dbReference type="GO" id="GO:0000425">
    <property type="term" value="P:pexophagy"/>
    <property type="evidence" value="ECO:0007669"/>
    <property type="project" value="EnsemblFungi"/>
</dbReference>
<dbReference type="GO" id="GO:0006660">
    <property type="term" value="P:phosphatidylserine catabolic process"/>
    <property type="evidence" value="ECO:0000318"/>
    <property type="project" value="GO_Central"/>
</dbReference>
<dbReference type="GO" id="GO:0034727">
    <property type="term" value="P:piecemeal microautophagy of the nucleus"/>
    <property type="evidence" value="ECO:0000318"/>
    <property type="project" value="GO_Central"/>
</dbReference>
<dbReference type="GO" id="GO:0006624">
    <property type="term" value="P:vacuolar protein processing"/>
    <property type="evidence" value="ECO:0007669"/>
    <property type="project" value="EnsemblFungi"/>
</dbReference>
<dbReference type="CDD" id="cd00519">
    <property type="entry name" value="Lipase_3"/>
    <property type="match status" value="1"/>
</dbReference>
<dbReference type="FunFam" id="3.40.50.1820:FF:000129">
    <property type="entry name" value="Autophagy related lipase Atg15, putative"/>
    <property type="match status" value="1"/>
</dbReference>
<dbReference type="Gene3D" id="3.40.50.1820">
    <property type="entry name" value="alpha/beta hydrolase"/>
    <property type="match status" value="1"/>
</dbReference>
<dbReference type="InterPro" id="IPR029058">
    <property type="entry name" value="AB_hydrolase_fold"/>
</dbReference>
<dbReference type="InterPro" id="IPR050805">
    <property type="entry name" value="ATG15_Lipase"/>
</dbReference>
<dbReference type="InterPro" id="IPR002921">
    <property type="entry name" value="Fungal_lipase-type"/>
</dbReference>
<dbReference type="PANTHER" id="PTHR47175">
    <property type="entry name" value="LIPASE ATG15-RELATED"/>
    <property type="match status" value="1"/>
</dbReference>
<dbReference type="PANTHER" id="PTHR47175:SF2">
    <property type="entry name" value="LIPASE ATG15-RELATED"/>
    <property type="match status" value="1"/>
</dbReference>
<dbReference type="Pfam" id="PF01764">
    <property type="entry name" value="Lipase_3"/>
    <property type="match status" value="1"/>
</dbReference>
<dbReference type="SUPFAM" id="SSF53474">
    <property type="entry name" value="alpha/beta-Hydrolases"/>
    <property type="match status" value="1"/>
</dbReference>
<dbReference type="PROSITE" id="PS00120">
    <property type="entry name" value="LIPASE_SER"/>
    <property type="match status" value="1"/>
</dbReference>
<proteinExistence type="inferred from homology"/>
<reference key="1">
    <citation type="journal article" date="2005" name="Science">
        <title>The genome of the basidiomycetous yeast and human pathogen Cryptococcus neoformans.</title>
        <authorList>
            <person name="Loftus B.J."/>
            <person name="Fung E."/>
            <person name="Roncaglia P."/>
            <person name="Rowley D."/>
            <person name="Amedeo P."/>
            <person name="Bruno D."/>
            <person name="Vamathevan J."/>
            <person name="Miranda M."/>
            <person name="Anderson I.J."/>
            <person name="Fraser J.A."/>
            <person name="Allen J.E."/>
            <person name="Bosdet I.E."/>
            <person name="Brent M.R."/>
            <person name="Chiu R."/>
            <person name="Doering T.L."/>
            <person name="Donlin M.J."/>
            <person name="D'Souza C.A."/>
            <person name="Fox D.S."/>
            <person name="Grinberg V."/>
            <person name="Fu J."/>
            <person name="Fukushima M."/>
            <person name="Haas B.J."/>
            <person name="Huang J.C."/>
            <person name="Janbon G."/>
            <person name="Jones S.J.M."/>
            <person name="Koo H.L."/>
            <person name="Krzywinski M.I."/>
            <person name="Kwon-Chung K.J."/>
            <person name="Lengeler K.B."/>
            <person name="Maiti R."/>
            <person name="Marra M.A."/>
            <person name="Marra R.E."/>
            <person name="Mathewson C.A."/>
            <person name="Mitchell T.G."/>
            <person name="Pertea M."/>
            <person name="Riggs F.R."/>
            <person name="Salzberg S.L."/>
            <person name="Schein J.E."/>
            <person name="Shvartsbeyn A."/>
            <person name="Shin H."/>
            <person name="Shumway M."/>
            <person name="Specht C.A."/>
            <person name="Suh B.B."/>
            <person name="Tenney A."/>
            <person name="Utterback T.R."/>
            <person name="Wickes B.L."/>
            <person name="Wortman J.R."/>
            <person name="Wye N.H."/>
            <person name="Kronstad J.W."/>
            <person name="Lodge J.K."/>
            <person name="Heitman J."/>
            <person name="Davis R.W."/>
            <person name="Fraser C.M."/>
            <person name="Hyman R.W."/>
        </authorList>
    </citation>
    <scope>NUCLEOTIDE SEQUENCE [LARGE SCALE GENOMIC DNA]</scope>
    <source>
        <strain>JEC21 / ATCC MYA-565</strain>
    </source>
</reference>
<protein>
    <recommendedName>
        <fullName>Putative lipase ATG15</fullName>
        <ecNumber>3.1.1.3</ecNumber>
    </recommendedName>
    <alternativeName>
        <fullName>Autophagy-related protein 15</fullName>
    </alternativeName>
</protein>
<comment type="function">
    <text evidence="1">Lipase which is essential for lysis of subvacuolar cytoplasm to vacuole targeted bodies and intravacuolar autophagic bodies. Involved in the lysis of intravacuolar multivesicular body (MVB) vesicles. The intravacuolar membrane disintegration by ATG15 is critical to life span extension (By similarity).</text>
</comment>
<comment type="catalytic activity">
    <reaction>
        <text>a triacylglycerol + H2O = a diacylglycerol + a fatty acid + H(+)</text>
        <dbReference type="Rhea" id="RHEA:12044"/>
        <dbReference type="ChEBI" id="CHEBI:15377"/>
        <dbReference type="ChEBI" id="CHEBI:15378"/>
        <dbReference type="ChEBI" id="CHEBI:17855"/>
        <dbReference type="ChEBI" id="CHEBI:18035"/>
        <dbReference type="ChEBI" id="CHEBI:28868"/>
        <dbReference type="EC" id="3.1.1.3"/>
    </reaction>
</comment>
<comment type="subunit">
    <text evidence="1">Binds to both phosphatidylinositol (PI) and phosphatidylinositol 3,5-bisphosphate (PIP2).</text>
</comment>
<comment type="subcellular location">
    <subcellularLocation>
        <location evidence="1">Endoplasmic reticulum membrane</location>
        <topology evidence="1">Single-pass type II membrane protein</topology>
    </subcellularLocation>
    <subcellularLocation>
        <location evidence="1">Golgi apparatus membrane</location>
        <topology evidence="1">Single-pass type II membrane protein</topology>
    </subcellularLocation>
    <subcellularLocation>
        <location evidence="1">Endosome</location>
        <location evidence="1">Multivesicular body membrane</location>
        <topology evidence="1">Single-pass type II membrane protein</topology>
    </subcellularLocation>
    <subcellularLocation>
        <location evidence="1">Prevacuolar compartment membrane</location>
        <topology evidence="1">Single-pass type II membrane protein</topology>
    </subcellularLocation>
    <text evidence="1">From ER, targeted to vacuolar lumen at the MVB vesicles via the Golgi and the prevacuolar compartment (PVC).</text>
</comment>
<comment type="similarity">
    <text evidence="5">Belongs to the AB hydrolase superfamily. Lipase family.</text>
</comment>
<sequence>MYIPGPLRLSSYLLPFLSSPSPPAQSSPDTRTISFKPVHAHGHAFVDNASTPTLLFLDQSPSASLYAHDYPIGAFGDDYVLPRLTSDVLEIRTRKKLIRRPKVRPPRIISWAQSYRAQALHFNGINNNNDNSNKSISLPESWLAPDLANPSDEWSDVEVTVPDLTDRQTVITLAKMSSNAYVTPGGAGWYTLNDWNASMPFGWEPDADGLRGHVFADEKNETVIISIKGTSAGVLGSGGPTAKNDKFNDNLLFSCCCARVDFSWTPVCDCYAGGYKCGQTCLEDALVSESVYATVGTNLYNNITYMYPNATIWLTGHSLGGAVSSLIGLSFGAPAVTYESPGELLPASRLHLPLPPGMPANLSGITHVYHTADPIAMGVCNGPYSSCYAAGFAMESKCHTGETILYDTVRVKGWSVDVRTHRIEEVIDKVLADPWPEEGEGKSGVWEKAVEGWYRAADRVRAALDESVVRDDVNVWWGWGRRGPKRQPGGEDPGWRKHGGVPKPVSEEDCVDCYKWEFGEWN</sequence>
<gene>
    <name type="primary">ATG15</name>
    <name type="ordered locus">CNC01140</name>
</gene>
<keyword id="KW-0072">Autophagy</keyword>
<keyword id="KW-0256">Endoplasmic reticulum</keyword>
<keyword id="KW-0967">Endosome</keyword>
<keyword id="KW-0325">Glycoprotein</keyword>
<keyword id="KW-0333">Golgi apparatus</keyword>
<keyword id="KW-0378">Hydrolase</keyword>
<keyword id="KW-0442">Lipid degradation</keyword>
<keyword id="KW-0443">Lipid metabolism</keyword>
<keyword id="KW-0472">Membrane</keyword>
<keyword id="KW-1185">Reference proteome</keyword>
<keyword id="KW-0735">Signal-anchor</keyword>
<keyword id="KW-0812">Transmembrane</keyword>
<keyword id="KW-1133">Transmembrane helix</keyword>
<accession>P0CO60</accession>
<accession>Q55V69</accession>
<accession>Q5KL13</accession>
<organism>
    <name type="scientific">Cryptococcus neoformans var. neoformans serotype D (strain JEC21 / ATCC MYA-565)</name>
    <name type="common">Filobasidiella neoformans</name>
    <dbReference type="NCBI Taxonomy" id="214684"/>
    <lineage>
        <taxon>Eukaryota</taxon>
        <taxon>Fungi</taxon>
        <taxon>Dikarya</taxon>
        <taxon>Basidiomycota</taxon>
        <taxon>Agaricomycotina</taxon>
        <taxon>Tremellomycetes</taxon>
        <taxon>Tremellales</taxon>
        <taxon>Cryptococcaceae</taxon>
        <taxon>Cryptococcus</taxon>
        <taxon>Cryptococcus neoformans species complex</taxon>
    </lineage>
</organism>
<name>ATG15_CRYNJ</name>
<feature type="chain" id="PRO_0000317963" description="Putative lipase ATG15">
    <location>
        <begin position="1"/>
        <end position="522"/>
    </location>
</feature>
<feature type="topological domain" description="Cytoplasmic" evidence="1">
    <location>
        <begin position="1"/>
        <end position="5"/>
    </location>
</feature>
<feature type="transmembrane region" description="Helical; Signal-anchor for type II membrane protein">
    <location>
        <begin position="6"/>
        <end position="26"/>
    </location>
</feature>
<feature type="topological domain" description="Lumenal" evidence="1">
    <location>
        <begin position="27"/>
        <end position="522"/>
    </location>
</feature>
<feature type="region of interest" description="Disordered" evidence="4">
    <location>
        <begin position="481"/>
        <end position="506"/>
    </location>
</feature>
<feature type="active site" description="Charge relay system" evidence="3">
    <location>
        <position position="318"/>
    </location>
</feature>
<feature type="glycosylation site" description="N-linked (GlcNAc...) asparagine" evidence="2">
    <location>
        <position position="48"/>
    </location>
</feature>
<feature type="glycosylation site" description="N-linked (GlcNAc...) asparagine" evidence="2">
    <location>
        <position position="133"/>
    </location>
</feature>
<feature type="glycosylation site" description="N-linked (GlcNAc...) asparagine" evidence="2">
    <location>
        <position position="196"/>
    </location>
</feature>
<feature type="glycosylation site" description="N-linked (GlcNAc...) asparagine" evidence="2">
    <location>
        <position position="220"/>
    </location>
</feature>
<feature type="glycosylation site" description="N-linked (GlcNAc...) asparagine" evidence="2">
    <location>
        <position position="302"/>
    </location>
</feature>
<feature type="glycosylation site" description="N-linked (GlcNAc...) asparagine" evidence="2">
    <location>
        <position position="309"/>
    </location>
</feature>
<feature type="glycosylation site" description="N-linked (GlcNAc...) asparagine" evidence="2">
    <location>
        <position position="361"/>
    </location>
</feature>